<accession>A7H017</accession>
<feature type="chain" id="PRO_0000339502" description="ATP synthase subunit beta">
    <location>
        <begin position="1"/>
        <end position="465"/>
    </location>
</feature>
<feature type="binding site" evidence="1">
    <location>
        <begin position="152"/>
        <end position="159"/>
    </location>
    <ligand>
        <name>ATP</name>
        <dbReference type="ChEBI" id="CHEBI:30616"/>
    </ligand>
</feature>
<comment type="function">
    <text evidence="1">Produces ATP from ADP in the presence of a proton gradient across the membrane. The catalytic sites are hosted primarily by the beta subunits.</text>
</comment>
<comment type="catalytic activity">
    <reaction evidence="1">
        <text>ATP + H2O + 4 H(+)(in) = ADP + phosphate + 5 H(+)(out)</text>
        <dbReference type="Rhea" id="RHEA:57720"/>
        <dbReference type="ChEBI" id="CHEBI:15377"/>
        <dbReference type="ChEBI" id="CHEBI:15378"/>
        <dbReference type="ChEBI" id="CHEBI:30616"/>
        <dbReference type="ChEBI" id="CHEBI:43474"/>
        <dbReference type="ChEBI" id="CHEBI:456216"/>
        <dbReference type="EC" id="7.1.2.2"/>
    </reaction>
</comment>
<comment type="subunit">
    <text evidence="1">F-type ATPases have 2 components, CF(1) - the catalytic core - and CF(0) - the membrane proton channel. CF(1) has five subunits: alpha(3), beta(3), gamma(1), delta(1), epsilon(1). CF(0) has three main subunits: a(1), b(2) and c(9-12). The alpha and beta chains form an alternating ring which encloses part of the gamma chain. CF(1) is attached to CF(0) by a central stalk formed by the gamma and epsilon chains, while a peripheral stalk is formed by the delta and b chains.</text>
</comment>
<comment type="subcellular location">
    <subcellularLocation>
        <location evidence="1">Cell inner membrane</location>
        <topology evidence="1">Peripheral membrane protein</topology>
    </subcellularLocation>
</comment>
<comment type="similarity">
    <text evidence="1">Belongs to the ATPase alpha/beta chains family.</text>
</comment>
<protein>
    <recommendedName>
        <fullName evidence="1">ATP synthase subunit beta</fullName>
        <ecNumber evidence="1">7.1.2.2</ecNumber>
    </recommendedName>
    <alternativeName>
        <fullName evidence="1">ATP synthase F1 sector subunit beta</fullName>
    </alternativeName>
    <alternativeName>
        <fullName evidence="1">F-ATPase subunit beta</fullName>
    </alternativeName>
</protein>
<sequence>MKGVISQVMGPVVDVDFNDYLPKINEAIEVYFEVEGKKNRLILEVAAHLGDNRVRTIAMDMSEGLTRGLEATALGAPISVPVGEKVLGRIFNVVGDLIDEGEGVEFDKHWSIHRDPPPFEEQSTKSEIFETGIKVVDLLAPYAKGGKVGLFGGAGVGKTVIIMELIHNVAFKHSGYSVFAGVGERTREGNDLYHEMKESNVLDKVALCYGQMNEPPGARNRIALTGLTMAEYFRDEMGLDVLMFIDNIFRFSQSGAEMSALLGRIPSAVGYQPTLASEMGKFQERITSTKKGSITSVQAVYVPADDLTDPAPATVFAHLDATTVLNRAIAEKGIYPAVDPLDSTSRMLDPQILGEDHYKVARGVQAVLQKYKDLQDIIAILGMDELSEEDKLTVDRARKIERFLSQPFFVAEVFTGSPGKYVSLEENIAGFKGILDGKYDSLPEAAFYMVGNIDEALAKAEKLKA</sequence>
<dbReference type="EC" id="7.1.2.2" evidence="1"/>
<dbReference type="EMBL" id="CP000767">
    <property type="protein sequence ID" value="EAU01066.1"/>
    <property type="molecule type" value="Genomic_DNA"/>
</dbReference>
<dbReference type="RefSeq" id="WP_009649332.1">
    <property type="nucleotide sequence ID" value="NC_009715.2"/>
</dbReference>
<dbReference type="SMR" id="A7H017"/>
<dbReference type="STRING" id="360105.CCV52592_1738"/>
<dbReference type="KEGG" id="ccv:CCV52592_1738"/>
<dbReference type="HOGENOM" id="CLU_022398_0_2_7"/>
<dbReference type="OrthoDB" id="9801639at2"/>
<dbReference type="Proteomes" id="UP000006380">
    <property type="component" value="Chromosome"/>
</dbReference>
<dbReference type="GO" id="GO:0005886">
    <property type="term" value="C:plasma membrane"/>
    <property type="evidence" value="ECO:0007669"/>
    <property type="project" value="UniProtKB-SubCell"/>
</dbReference>
<dbReference type="GO" id="GO:0045259">
    <property type="term" value="C:proton-transporting ATP synthase complex"/>
    <property type="evidence" value="ECO:0007669"/>
    <property type="project" value="UniProtKB-KW"/>
</dbReference>
<dbReference type="GO" id="GO:0005524">
    <property type="term" value="F:ATP binding"/>
    <property type="evidence" value="ECO:0007669"/>
    <property type="project" value="UniProtKB-UniRule"/>
</dbReference>
<dbReference type="GO" id="GO:0016887">
    <property type="term" value="F:ATP hydrolysis activity"/>
    <property type="evidence" value="ECO:0007669"/>
    <property type="project" value="InterPro"/>
</dbReference>
<dbReference type="GO" id="GO:0046933">
    <property type="term" value="F:proton-transporting ATP synthase activity, rotational mechanism"/>
    <property type="evidence" value="ECO:0007669"/>
    <property type="project" value="UniProtKB-UniRule"/>
</dbReference>
<dbReference type="CDD" id="cd18110">
    <property type="entry name" value="ATP-synt_F1_beta_C"/>
    <property type="match status" value="1"/>
</dbReference>
<dbReference type="CDD" id="cd18115">
    <property type="entry name" value="ATP-synt_F1_beta_N"/>
    <property type="match status" value="1"/>
</dbReference>
<dbReference type="CDD" id="cd01133">
    <property type="entry name" value="F1-ATPase_beta_CD"/>
    <property type="match status" value="1"/>
</dbReference>
<dbReference type="FunFam" id="1.10.1140.10:FF:000001">
    <property type="entry name" value="ATP synthase subunit beta"/>
    <property type="match status" value="1"/>
</dbReference>
<dbReference type="FunFam" id="3.40.50.300:FF:000004">
    <property type="entry name" value="ATP synthase subunit beta"/>
    <property type="match status" value="1"/>
</dbReference>
<dbReference type="Gene3D" id="2.40.10.170">
    <property type="match status" value="1"/>
</dbReference>
<dbReference type="Gene3D" id="1.10.1140.10">
    <property type="entry name" value="Bovine Mitochondrial F1-atpase, Atp Synthase Beta Chain, Chain D, domain 3"/>
    <property type="match status" value="1"/>
</dbReference>
<dbReference type="Gene3D" id="3.40.50.300">
    <property type="entry name" value="P-loop containing nucleotide triphosphate hydrolases"/>
    <property type="match status" value="1"/>
</dbReference>
<dbReference type="HAMAP" id="MF_01347">
    <property type="entry name" value="ATP_synth_beta_bact"/>
    <property type="match status" value="1"/>
</dbReference>
<dbReference type="InterPro" id="IPR003593">
    <property type="entry name" value="AAA+_ATPase"/>
</dbReference>
<dbReference type="InterPro" id="IPR055190">
    <property type="entry name" value="ATP-synt_VA_C"/>
</dbReference>
<dbReference type="InterPro" id="IPR005722">
    <property type="entry name" value="ATP_synth_F1_bsu"/>
</dbReference>
<dbReference type="InterPro" id="IPR020003">
    <property type="entry name" value="ATPase_a/bsu_AS"/>
</dbReference>
<dbReference type="InterPro" id="IPR050053">
    <property type="entry name" value="ATPase_alpha/beta_chains"/>
</dbReference>
<dbReference type="InterPro" id="IPR004100">
    <property type="entry name" value="ATPase_F1/V1/A1_a/bsu_N"/>
</dbReference>
<dbReference type="InterPro" id="IPR036121">
    <property type="entry name" value="ATPase_F1/V1/A1_a/bsu_N_sf"/>
</dbReference>
<dbReference type="InterPro" id="IPR000194">
    <property type="entry name" value="ATPase_F1/V1/A1_a/bsu_nucl-bd"/>
</dbReference>
<dbReference type="InterPro" id="IPR024034">
    <property type="entry name" value="ATPase_F1/V1_b/a_C"/>
</dbReference>
<dbReference type="InterPro" id="IPR027417">
    <property type="entry name" value="P-loop_NTPase"/>
</dbReference>
<dbReference type="NCBIfam" id="TIGR01039">
    <property type="entry name" value="atpD"/>
    <property type="match status" value="1"/>
</dbReference>
<dbReference type="PANTHER" id="PTHR15184">
    <property type="entry name" value="ATP SYNTHASE"/>
    <property type="match status" value="1"/>
</dbReference>
<dbReference type="PANTHER" id="PTHR15184:SF71">
    <property type="entry name" value="ATP SYNTHASE SUBUNIT BETA, MITOCHONDRIAL"/>
    <property type="match status" value="1"/>
</dbReference>
<dbReference type="Pfam" id="PF00006">
    <property type="entry name" value="ATP-synt_ab"/>
    <property type="match status" value="1"/>
</dbReference>
<dbReference type="Pfam" id="PF02874">
    <property type="entry name" value="ATP-synt_ab_N"/>
    <property type="match status" value="1"/>
</dbReference>
<dbReference type="Pfam" id="PF22919">
    <property type="entry name" value="ATP-synt_VA_C"/>
    <property type="match status" value="1"/>
</dbReference>
<dbReference type="SMART" id="SM00382">
    <property type="entry name" value="AAA"/>
    <property type="match status" value="1"/>
</dbReference>
<dbReference type="SUPFAM" id="SSF47917">
    <property type="entry name" value="C-terminal domain of alpha and beta subunits of F1 ATP synthase"/>
    <property type="match status" value="1"/>
</dbReference>
<dbReference type="SUPFAM" id="SSF50615">
    <property type="entry name" value="N-terminal domain of alpha and beta subunits of F1 ATP synthase"/>
    <property type="match status" value="1"/>
</dbReference>
<dbReference type="SUPFAM" id="SSF52540">
    <property type="entry name" value="P-loop containing nucleoside triphosphate hydrolases"/>
    <property type="match status" value="1"/>
</dbReference>
<dbReference type="PROSITE" id="PS00152">
    <property type="entry name" value="ATPASE_ALPHA_BETA"/>
    <property type="match status" value="1"/>
</dbReference>
<keyword id="KW-0066">ATP synthesis</keyword>
<keyword id="KW-0067">ATP-binding</keyword>
<keyword id="KW-0997">Cell inner membrane</keyword>
<keyword id="KW-1003">Cell membrane</keyword>
<keyword id="KW-0139">CF(1)</keyword>
<keyword id="KW-0375">Hydrogen ion transport</keyword>
<keyword id="KW-0406">Ion transport</keyword>
<keyword id="KW-0472">Membrane</keyword>
<keyword id="KW-0547">Nucleotide-binding</keyword>
<keyword id="KW-1185">Reference proteome</keyword>
<keyword id="KW-1278">Translocase</keyword>
<keyword id="KW-0813">Transport</keyword>
<name>ATPB_CAMC5</name>
<evidence type="ECO:0000255" key="1">
    <source>
        <dbReference type="HAMAP-Rule" id="MF_01347"/>
    </source>
</evidence>
<gene>
    <name evidence="1" type="primary">atpD</name>
    <name type="ordered locus">Ccur92_15050</name>
    <name type="ORF">CCV52592_1738</name>
</gene>
<reference key="1">
    <citation type="submission" date="2007-07" db="EMBL/GenBank/DDBJ databases">
        <title>Genome sequence of Campylobacter curvus 525.92 isolated from human feces.</title>
        <authorList>
            <person name="Fouts D.E."/>
            <person name="Mongodin E.F."/>
            <person name="Puiu D."/>
            <person name="Sebastian Y."/>
            <person name="Miller W.G."/>
            <person name="Mandrell R.E."/>
            <person name="Lastovica A.J."/>
            <person name="Nelson K.E."/>
        </authorList>
    </citation>
    <scope>NUCLEOTIDE SEQUENCE [LARGE SCALE GENOMIC DNA]</scope>
    <source>
        <strain>525.92</strain>
    </source>
</reference>
<organism>
    <name type="scientific">Campylobacter curvus (strain 525.92)</name>
    <dbReference type="NCBI Taxonomy" id="360105"/>
    <lineage>
        <taxon>Bacteria</taxon>
        <taxon>Pseudomonadati</taxon>
        <taxon>Campylobacterota</taxon>
        <taxon>Epsilonproteobacteria</taxon>
        <taxon>Campylobacterales</taxon>
        <taxon>Campylobacteraceae</taxon>
        <taxon>Campylobacter</taxon>
    </lineage>
</organism>
<proteinExistence type="inferred from homology"/>